<reference evidence="13 16" key="1">
    <citation type="submission" date="2004-09" db="EMBL/GenBank/DDBJ databases">
        <authorList>
            <person name="Jiang Y.-H."/>
            <person name="Beaudet A.L."/>
        </authorList>
    </citation>
    <scope>NUCLEOTIDE SEQUENCE [MRNA] (ISOFORMS 1; 2 AND 3)</scope>
    <scope>VARIANT SER-820</scope>
</reference>
<reference evidence="13 17" key="2">
    <citation type="journal article" date="1994" name="DNA Res.">
        <title>Prediction of the coding sequences of unidentified human genes. II. The coding sequences of 40 new genes (KIAA0041-KIAA0080) deduced by analysis of cDNA clones from human cell line KG-1.</title>
        <authorList>
            <person name="Nomura N."/>
            <person name="Nagase T."/>
            <person name="Miyajima N."/>
            <person name="Sazuka T."/>
            <person name="Tanaka A."/>
            <person name="Sato S."/>
            <person name="Seki N."/>
            <person name="Kawarabayasi Y."/>
            <person name="Ishikawa K."/>
            <person name="Tabata S."/>
        </authorList>
    </citation>
    <scope>NUCLEOTIDE SEQUENCE [LARGE SCALE MRNA] (ISOFORM 1)</scope>
    <source>
        <tissue evidence="8">Bone marrow</tissue>
    </source>
</reference>
<reference evidence="13 18" key="3">
    <citation type="journal article" date="2004" name="Nat. Genet.">
        <title>Complete sequencing and characterization of 21,243 full-length human cDNAs.</title>
        <authorList>
            <person name="Ota T."/>
            <person name="Suzuki Y."/>
            <person name="Nishikawa T."/>
            <person name="Otsuki T."/>
            <person name="Sugiyama T."/>
            <person name="Irie R."/>
            <person name="Wakamatsu A."/>
            <person name="Hayashi K."/>
            <person name="Sato H."/>
            <person name="Nagai K."/>
            <person name="Kimura K."/>
            <person name="Makita H."/>
            <person name="Sekine M."/>
            <person name="Obayashi M."/>
            <person name="Nishi T."/>
            <person name="Shibahara T."/>
            <person name="Tanaka T."/>
            <person name="Ishii S."/>
            <person name="Yamamoto J."/>
            <person name="Saito K."/>
            <person name="Kawai Y."/>
            <person name="Isono Y."/>
            <person name="Nakamura Y."/>
            <person name="Nagahari K."/>
            <person name="Murakami K."/>
            <person name="Yasuda T."/>
            <person name="Iwayanagi T."/>
            <person name="Wagatsuma M."/>
            <person name="Shiratori A."/>
            <person name="Sudo H."/>
            <person name="Hosoiri T."/>
            <person name="Kaku Y."/>
            <person name="Kodaira H."/>
            <person name="Kondo H."/>
            <person name="Sugawara M."/>
            <person name="Takahashi M."/>
            <person name="Kanda K."/>
            <person name="Yokoi T."/>
            <person name="Furuya T."/>
            <person name="Kikkawa E."/>
            <person name="Omura Y."/>
            <person name="Abe K."/>
            <person name="Kamihara K."/>
            <person name="Katsuta N."/>
            <person name="Sato K."/>
            <person name="Tanikawa M."/>
            <person name="Yamazaki M."/>
            <person name="Ninomiya K."/>
            <person name="Ishibashi T."/>
            <person name="Yamashita H."/>
            <person name="Murakawa K."/>
            <person name="Fujimori K."/>
            <person name="Tanai H."/>
            <person name="Kimata M."/>
            <person name="Watanabe M."/>
            <person name="Hiraoka S."/>
            <person name="Chiba Y."/>
            <person name="Ishida S."/>
            <person name="Ono Y."/>
            <person name="Takiguchi S."/>
            <person name="Watanabe S."/>
            <person name="Yosida M."/>
            <person name="Hotuta T."/>
            <person name="Kusano J."/>
            <person name="Kanehori K."/>
            <person name="Takahashi-Fujii A."/>
            <person name="Hara H."/>
            <person name="Tanase T.-O."/>
            <person name="Nomura Y."/>
            <person name="Togiya S."/>
            <person name="Komai F."/>
            <person name="Hara R."/>
            <person name="Takeuchi K."/>
            <person name="Arita M."/>
            <person name="Imose N."/>
            <person name="Musashino K."/>
            <person name="Yuuki H."/>
            <person name="Oshima A."/>
            <person name="Sasaki N."/>
            <person name="Aotsuka S."/>
            <person name="Yoshikawa Y."/>
            <person name="Matsunawa H."/>
            <person name="Ichihara T."/>
            <person name="Shiohata N."/>
            <person name="Sano S."/>
            <person name="Moriya S."/>
            <person name="Momiyama H."/>
            <person name="Satoh N."/>
            <person name="Takami S."/>
            <person name="Terashima Y."/>
            <person name="Suzuki O."/>
            <person name="Nakagawa S."/>
            <person name="Senoh A."/>
            <person name="Mizoguchi H."/>
            <person name="Goto Y."/>
            <person name="Shimizu F."/>
            <person name="Wakebe H."/>
            <person name="Hishigaki H."/>
            <person name="Watanabe T."/>
            <person name="Sugiyama A."/>
            <person name="Takemoto M."/>
            <person name="Kawakami B."/>
            <person name="Yamazaki M."/>
            <person name="Watanabe K."/>
            <person name="Kumagai A."/>
            <person name="Itakura S."/>
            <person name="Fukuzumi Y."/>
            <person name="Fujimori Y."/>
            <person name="Komiyama M."/>
            <person name="Tashiro H."/>
            <person name="Tanigami A."/>
            <person name="Fujiwara T."/>
            <person name="Ono T."/>
            <person name="Yamada K."/>
            <person name="Fujii Y."/>
            <person name="Ozaki K."/>
            <person name="Hirao M."/>
            <person name="Ohmori Y."/>
            <person name="Kawabata A."/>
            <person name="Hikiji T."/>
            <person name="Kobatake N."/>
            <person name="Inagaki H."/>
            <person name="Ikema Y."/>
            <person name="Okamoto S."/>
            <person name="Okitani R."/>
            <person name="Kawakami T."/>
            <person name="Noguchi S."/>
            <person name="Itoh T."/>
            <person name="Shigeta K."/>
            <person name="Senba T."/>
            <person name="Matsumura K."/>
            <person name="Nakajima Y."/>
            <person name="Mizuno T."/>
            <person name="Morinaga M."/>
            <person name="Sasaki M."/>
            <person name="Togashi T."/>
            <person name="Oyama M."/>
            <person name="Hata H."/>
            <person name="Watanabe M."/>
            <person name="Komatsu T."/>
            <person name="Mizushima-Sugano J."/>
            <person name="Satoh T."/>
            <person name="Shirai Y."/>
            <person name="Takahashi Y."/>
            <person name="Nakagawa K."/>
            <person name="Okumura K."/>
            <person name="Nagase T."/>
            <person name="Nomura N."/>
            <person name="Kikuchi H."/>
            <person name="Masuho Y."/>
            <person name="Yamashita R."/>
            <person name="Nakai K."/>
            <person name="Yada T."/>
            <person name="Nakamura Y."/>
            <person name="Ohara O."/>
            <person name="Isogai T."/>
            <person name="Sugano S."/>
        </authorList>
    </citation>
    <scope>NUCLEOTIDE SEQUENCE [LARGE SCALE MRNA] (ISOFORMS 1 AND 2)</scope>
    <scope>VARIANT SER-820</scope>
    <source>
        <tissue evidence="18">Brain</tissue>
        <tissue>Placenta</tissue>
    </source>
</reference>
<reference evidence="13 16" key="4">
    <citation type="submission" date="2005-07" db="EMBL/GenBank/DDBJ databases">
        <authorList>
            <person name="Mural R.J."/>
            <person name="Istrail S."/>
            <person name="Sutton G.G."/>
            <person name="Florea L."/>
            <person name="Halpern A.L."/>
            <person name="Mobarry C.M."/>
            <person name="Lippert R."/>
            <person name="Walenz B."/>
            <person name="Shatkay H."/>
            <person name="Dew I."/>
            <person name="Miller J.R."/>
            <person name="Flanigan M.J."/>
            <person name="Edwards N.J."/>
            <person name="Bolanos R."/>
            <person name="Fasulo D."/>
            <person name="Halldorsson B.V."/>
            <person name="Hannenhalli S."/>
            <person name="Turner R."/>
            <person name="Yooseph S."/>
            <person name="Lu F."/>
            <person name="Nusskern D.R."/>
            <person name="Shue B.C."/>
            <person name="Zheng X.H."/>
            <person name="Zhong F."/>
            <person name="Delcher A.L."/>
            <person name="Huson D.H."/>
            <person name="Kravitz S.A."/>
            <person name="Mouchard L."/>
            <person name="Reinert K."/>
            <person name="Remington K.A."/>
            <person name="Clark A.G."/>
            <person name="Waterman M.S."/>
            <person name="Eichler E.E."/>
            <person name="Adams M.D."/>
            <person name="Hunkapiller M.W."/>
            <person name="Myers E.W."/>
            <person name="Venter J.C."/>
        </authorList>
    </citation>
    <scope>NUCLEOTIDE SEQUENCE [LARGE SCALE GENOMIC DNA]</scope>
</reference>
<reference evidence="13 15" key="5">
    <citation type="journal article" date="2004" name="Genome Res.">
        <title>The status, quality, and expansion of the NIH full-length cDNA project: the Mammalian Gene Collection (MGC).</title>
        <authorList>
            <consortium name="The MGC Project Team"/>
        </authorList>
    </citation>
    <scope>NUCLEOTIDE SEQUENCE [LARGE SCALE MRNA] (ISOFORM 1)</scope>
    <source>
        <tissue evidence="15">Brain</tissue>
        <tissue evidence="14">Placenta</tissue>
    </source>
</reference>
<reference evidence="13 16" key="6">
    <citation type="submission" date="2007-07" db="UniProtKB">
        <authorList>
            <person name="Bienvenut W.V."/>
            <person name="Claeys D."/>
            <person name="Boldt K."/>
            <person name="von Kriegsheim A.F."/>
            <person name="Kolch W."/>
        </authorList>
    </citation>
    <scope>PROTEIN SEQUENCE OF 50-58; 111-130; 151-163; 366-377; 441-448; 505-515; 564-573; 754-760; 815-826; 867-877; 1054-1076; 1211-1224 AND 1228-1240</scope>
    <scope>IDENTIFICATION BY MASS SPECTROMETRY</scope>
    <source>
        <tissue>B-cell lymphoma</tissue>
        <tissue>Hepatoma</tissue>
    </source>
</reference>
<reference evidence="13" key="7">
    <citation type="journal article" date="1998" name="J. Biol. Chem.">
        <title>p140Sra-1 (specifically Rac1-associated protein) is a novel specific target for Rac1 small GTPase.</title>
        <authorList>
            <person name="Kobayashi K."/>
            <person name="Kuroda S."/>
            <person name="Fukata M."/>
            <person name="Nakamura T."/>
            <person name="Nagase T."/>
            <person name="Nomura N."/>
            <person name="Matsuura Y."/>
            <person name="Yoshida-Kubomura N."/>
            <person name="Iwamatsu A."/>
            <person name="Kaibuchi K."/>
        </authorList>
    </citation>
    <scope>FUNCTION</scope>
</reference>
<reference evidence="13" key="8">
    <citation type="journal article" date="2005" name="Mol. Cell. Biol.">
        <title>CRMP-2 is involved in kinesin-1-dependent transport of the Sra-1/WAVE1 complex and axon formation.</title>
        <authorList>
            <person name="Kawano Y."/>
            <person name="Yoshimura T."/>
            <person name="Tsuboi D."/>
            <person name="Kawabata S."/>
            <person name="Kaneko-Kawano T."/>
            <person name="Shirataki H."/>
            <person name="Takenawa T."/>
            <person name="Kaibuchi K."/>
        </authorList>
    </citation>
    <scope>FUNCTION</scope>
    <scope>INTERACTION WITH DPYSL2</scope>
</reference>
<reference key="9">
    <citation type="journal article" date="2006" name="PLoS Biol.">
        <title>Hem-1 complexes are essential for Rac activation, actin polymerization, and myosin regulation during neutrophil chemotaxis.</title>
        <authorList>
            <person name="Weiner O.D."/>
            <person name="Rentel M.C."/>
            <person name="Ott A."/>
            <person name="Brown G.E."/>
            <person name="Jedrychowski M."/>
            <person name="Yaffe M.B."/>
            <person name="Gygi S.P."/>
            <person name="Cantley L.C."/>
            <person name="Bourne H.R."/>
            <person name="Kirschner M.W."/>
        </authorList>
    </citation>
    <scope>IDENTIFICATION IN THE WAVE2 COMPLEX</scope>
</reference>
<reference key="10">
    <citation type="journal article" date="2009" name="Cell">
        <title>Cyfip1 is a putative invasion suppressor in epithelial cancers.</title>
        <authorList>
            <person name="Silva J.M."/>
            <person name="Ezhkova E."/>
            <person name="Silva J."/>
            <person name="Heart S."/>
            <person name="Castillo M."/>
            <person name="Campos Y."/>
            <person name="Castro V."/>
            <person name="Bonilla F."/>
            <person name="Cordon-Cardo C."/>
            <person name="Muthuswamy S.K."/>
            <person name="Powers S."/>
            <person name="Fuchs E."/>
            <person name="Hannon G.J."/>
        </authorList>
    </citation>
    <scope>FUNCTION</scope>
</reference>
<reference key="11">
    <citation type="journal article" date="2011" name="BMC Syst. Biol.">
        <title>Initial characterization of the human central proteome.</title>
        <authorList>
            <person name="Burkard T.R."/>
            <person name="Planyavsky M."/>
            <person name="Kaupe I."/>
            <person name="Breitwieser F.P."/>
            <person name="Buerckstuemmer T."/>
            <person name="Bennett K.L."/>
            <person name="Superti-Furga G."/>
            <person name="Colinge J."/>
        </authorList>
    </citation>
    <scope>IDENTIFICATION BY MASS SPECTROMETRY [LARGE SCALE ANALYSIS]</scope>
</reference>
<reference key="12">
    <citation type="journal article" date="2013" name="J. Proteome Res.">
        <title>Toward a comprehensive characterization of a human cancer cell phosphoproteome.</title>
        <authorList>
            <person name="Zhou H."/>
            <person name="Di Palma S."/>
            <person name="Preisinger C."/>
            <person name="Peng M."/>
            <person name="Polat A.N."/>
            <person name="Heck A.J."/>
            <person name="Mohammed S."/>
        </authorList>
    </citation>
    <scope>PHOSPHORYLATION [LARGE SCALE ANALYSIS] AT SER-583 AND THR-1234</scope>
    <scope>IDENTIFICATION BY MASS SPECTROMETRY [LARGE SCALE ANALYSIS]</scope>
    <source>
        <tissue>Erythroleukemia</tissue>
    </source>
</reference>
<reference key="13">
    <citation type="journal article" date="2014" name="J. Proteomics">
        <title>An enzyme assisted RP-RPLC approach for in-depth analysis of human liver phosphoproteome.</title>
        <authorList>
            <person name="Bian Y."/>
            <person name="Song C."/>
            <person name="Cheng K."/>
            <person name="Dong M."/>
            <person name="Wang F."/>
            <person name="Huang J."/>
            <person name="Sun D."/>
            <person name="Wang L."/>
            <person name="Ye M."/>
            <person name="Zou H."/>
        </authorList>
    </citation>
    <scope>IDENTIFICATION BY MASS SPECTROMETRY [LARGE SCALE ANALYSIS]</scope>
    <source>
        <tissue>Liver</tissue>
    </source>
</reference>
<reference key="14">
    <citation type="journal article" date="2015" name="Proteomics">
        <title>N-terminome analysis of the human mitochondrial proteome.</title>
        <authorList>
            <person name="Vaca Jacome A.S."/>
            <person name="Rabilloud T."/>
            <person name="Schaeffer-Reiss C."/>
            <person name="Rompais M."/>
            <person name="Ayoub D."/>
            <person name="Lane L."/>
            <person name="Bairoch A."/>
            <person name="Van Dorsselaer A."/>
            <person name="Carapito C."/>
        </authorList>
    </citation>
    <scope>IDENTIFICATION BY MASS SPECTROMETRY [LARGE SCALE ANALYSIS]</scope>
</reference>
<reference key="15">
    <citation type="journal article" date="2010" name="Nature">
        <title>Structure and control of the actin regulatory WAVE complex.</title>
        <authorList>
            <person name="Chen Z."/>
            <person name="Borek D."/>
            <person name="Padrick S.B."/>
            <person name="Gomez T.S."/>
            <person name="Metlagel Z."/>
            <person name="Ismail A.M."/>
            <person name="Umetani J."/>
            <person name="Billadeau D.D."/>
            <person name="Otwinowski Z."/>
            <person name="Rosen M.K."/>
        </authorList>
    </citation>
    <scope>X-RAY CRYSTALLOGRAPHY (2.29 ANGSTROMS) OF WAVE1 COMPLEX</scope>
    <scope>FUNCTION</scope>
    <scope>INTERACTION WITH RAC1</scope>
    <scope>MUTAGENESIS OF CYS-179; ARG-190; GLU-434; PHE-626; MET-632; LEU-697; TYR-704; LEU-841 AND 844-PHE-TRP-845</scope>
    <scope>SUBUNIT</scope>
</reference>
<protein>
    <recommendedName>
        <fullName>Cytoplasmic FMR1-interacting protein 1</fullName>
    </recommendedName>
    <alternativeName>
        <fullName>Specifically Rac1-associated protein 1</fullName>
        <shortName>Sra-1</shortName>
    </alternativeName>
    <alternativeName>
        <fullName>p140sra-1</fullName>
    </alternativeName>
</protein>
<organism>
    <name type="scientific">Homo sapiens</name>
    <name type="common">Human</name>
    <dbReference type="NCBI Taxonomy" id="9606"/>
    <lineage>
        <taxon>Eukaryota</taxon>
        <taxon>Metazoa</taxon>
        <taxon>Chordata</taxon>
        <taxon>Craniata</taxon>
        <taxon>Vertebrata</taxon>
        <taxon>Euteleostomi</taxon>
        <taxon>Mammalia</taxon>
        <taxon>Eutheria</taxon>
        <taxon>Euarchontoglires</taxon>
        <taxon>Primates</taxon>
        <taxon>Haplorrhini</taxon>
        <taxon>Catarrhini</taxon>
        <taxon>Hominidae</taxon>
        <taxon>Homo</taxon>
    </lineage>
</organism>
<sequence>MAAQVTLEDALSNVDLLEELPLPDQQPCIEPPPSSLLYQPNFNTNFEDRNAFVTGIARYIEQATVHSSMNEMLEEGQEYAVMLYTWRSCSRAIPQVKCNEQPNRVEIYEKTVEVLEPEVTKLMNFMYFQRNAIERFCGEVRRLCHAERRKDFVSEAYLITLGKFINMFAVLDELKNMKCSVKNDHSAYKRAAQFLRKMADPQSIQESQNLSMFLANHNKITQSLQQQLEVISGYEELLADIVNLCVDYYENRMYLTPSEKHMLLKVMGFGLYLMDGSVSNIYKLDAKKRINLSKIDKYFKQLQVVPLFGDMQIELARYIKTSAHYEENKSRWTCTSSGSSPQYNICEQMIQIREDHMRFISELARYSNSEVVTGSGRQEAQKTDAEYRKLFDLALQGLQLLSQWSAHVMEVYSWKLVHPTDKYSNKDCPDSAEEYERATRYNYTSEEKFALVEVIAMIKGLQVLMGRMESVFNHAIRHTVYAALQDFSQVTLREPLRQAIKKKKNVIQSVLQAIRKTVCDWETGHEPFNDPALRGEKDPKSGFDIKVPRRAVGPSSTQLYMVRTMLESLIADKSGSKKTLRSSLEGPTILDIEKFHRESFFYTHLINFSETLQQCCDLSQLWFREFFLELTMGRRIQFPIEMSMPWILTDHILETKEASMMEYVLYSLDLYNDSAHYALTRFNKQFLYDEIEAEVNLCFDQFVYKLADQIFAYYKVMAGSLLLDKRLRSECKNQGATIHLPPSNRYETLLKQRHVQLLGRSIDLNRLITQRVSAAMYKSLELAIGRFESEDLTSIVELDGLLEINRMTHKLLSRYLTLDGFDAMFREANHNVSAPYGRITLHVFWELNYDFLPNYCYNGSTNRFVRTVLPFSQEFQRDKQPNAQPQYLHGSKALNLAYSSIYGSYRNFVGPPHFQVICRLLGYQGIAVVMEELLKVVKSLLQGTILQYVKTLMEVMPKICRLPRHEYGSPGILEFFHHQLKDIVEYAELKTVCFQNLREVGNAILFCLLIEQSLSLEEVCDLLHAAPFQNILPRVHVKEGERLDAKMKRLESKYAPLHLVPLIERLGTPQQIAIAREGDLLTKERLCCGLSMFEVILTRIRSFLDDPIWRGPLPSNGVMHVDECVEFHRLWSAMQFVYCIPVGTHEFTVEQCFGDGLHWAGCMIIVLLGQQRRFAVLDFCYHLLKVQKHDGKDEIIKNVPLKKMVERIRKFQILNDEIITILDKYLKSGDGEGTPVEHVRCFQPPIHQSLASS</sequence>
<feature type="chain" id="PRO_0000279706" description="Cytoplasmic FMR1-interacting protein 1">
    <location>
        <begin position="1"/>
        <end position="1253"/>
    </location>
</feature>
<feature type="modified residue" description="Phosphoserine" evidence="20">
    <location>
        <position position="583"/>
    </location>
</feature>
<feature type="modified residue" description="Phosphothreonine" evidence="20">
    <location>
        <position position="1234"/>
    </location>
</feature>
<feature type="splice variant" id="VSP_052345" description="In isoform 3." evidence="12">
    <location>
        <begin position="1"/>
        <end position="806"/>
    </location>
</feature>
<feature type="splice variant" id="VSP_052346" description="In isoform 2." evidence="11 12">
    <location>
        <begin position="1"/>
        <end position="431"/>
    </location>
</feature>
<feature type="splice variant" id="VSP_052347" description="In isoform 2." evidence="11 12">
    <original>AEEYERATRYNYTSEEKFALVEVIAMIKGLQVLMGRMESVFNHAIRHTVYAALQDFSQVTLREPLRQAIKKKKNVIQSVLQAIRKTVCDWETGHEPFNDPALRGEKDPKSGFDIKVPRRAVGPSST</original>
    <variation>MAESLGSAELLRQLKSLGMERLLHAVNTFLRQSCTYLPLLTFGGKTSFVSLDVYGTEANCSATSCSFPKAAATWPRRQAPGPLGELVRGPPDQGVAEQSFSHGLFEFGITNVPCIFSPPQMFPWII</variation>
    <location>
        <begin position="432"/>
        <end position="557"/>
    </location>
</feature>
<feature type="sequence variant" id="VAR_053849" description="In dbSNP:rs34683919.">
    <original>A</original>
    <variation>P</variation>
    <location>
        <position position="532"/>
    </location>
</feature>
<feature type="sequence variant" id="VAR_053850" description="In dbSNP:rs17137190.">
    <original>G</original>
    <variation>D</variation>
    <location>
        <position position="820"/>
    </location>
</feature>
<feature type="sequence variant" id="VAR_053851" description="In dbSNP:rs7170637." evidence="3 10">
    <original>G</original>
    <variation>S</variation>
    <location>
        <position position="820"/>
    </location>
</feature>
<feature type="mutagenesis site" description="Reduced interaction with RAC1." evidence="7">
    <original>C</original>
    <variation>R</variation>
    <location>
        <position position="179"/>
    </location>
</feature>
<feature type="mutagenesis site" description="Reduced interaction with RAC1." evidence="7">
    <original>R</original>
    <variation>D</variation>
    <location>
        <position position="190"/>
    </location>
</feature>
<feature type="mutagenesis site" description="Reduced interaction with RAC1; when associated with A-626." evidence="7">
    <original>E</original>
    <variation>K</variation>
    <location>
        <position position="434"/>
    </location>
</feature>
<feature type="mutagenesis site" description="Reduced interaction with RAC1; when associated with K-434." evidence="7">
    <original>F</original>
    <variation>A</variation>
    <location>
        <position position="626"/>
    </location>
</feature>
<feature type="mutagenesis site" description="Reduced interaction with RAC1." evidence="7">
    <original>M</original>
    <variation>D</variation>
    <location>
        <position position="632"/>
    </location>
</feature>
<feature type="mutagenesis site" description="Constitutive induction of the formation of actin filaments; when associated with D-704." evidence="7">
    <original>L</original>
    <variation>D</variation>
    <location>
        <position position="697"/>
    </location>
</feature>
<feature type="mutagenesis site" description="Constitutive induction of the formation of actin filaments; when associated with D-697." evidence="7">
    <original>Y</original>
    <variation>D</variation>
    <location>
        <position position="704"/>
    </location>
</feature>
<feature type="mutagenesis site" description="Constitutive induction of the formation of actin filaments; when associated with 844-A-A-845." evidence="7">
    <original>L</original>
    <variation>A</variation>
    <location>
        <position position="841"/>
    </location>
</feature>
<feature type="mutagenesis site" description="Constitutive induction of the formation of actin filaments; when associated with A-841." evidence="7">
    <original>FW</original>
    <variation>AA</variation>
    <location>
        <begin position="844"/>
        <end position="845"/>
    </location>
</feature>
<feature type="sequence conflict" description="In Ref. 1; AAW51478 and 3; BAC86825." evidence="13" ref="1 3">
    <original>S</original>
    <variation>N</variation>
    <location>
        <position position="583"/>
    </location>
</feature>
<feature type="sequence conflict" description="In Ref. 1; AAW51478 and 3; BAC86825." evidence="13" ref="1 3">
    <original>Y</original>
    <variation>H</variation>
    <location>
        <position position="898"/>
    </location>
</feature>
<feature type="sequence conflict" description="In Ref. 1; AAW51478 and 3; BAC86825." evidence="13" ref="1 3">
    <original>M</original>
    <variation>R</variation>
    <location>
        <position position="930"/>
    </location>
</feature>
<feature type="sequence conflict" description="In Ref. 1; AAW51479." evidence="13" ref="1">
    <original>V</original>
    <variation>A</variation>
    <location>
        <position position="1176"/>
    </location>
</feature>
<feature type="helix" evidence="21">
    <location>
        <begin position="7"/>
        <end position="17"/>
    </location>
</feature>
<feature type="helix" evidence="21">
    <location>
        <begin position="59"/>
        <end position="84"/>
    </location>
</feature>
<feature type="helix" evidence="21">
    <location>
        <begin position="90"/>
        <end position="92"/>
    </location>
</feature>
<feature type="strand" evidence="23">
    <location>
        <begin position="97"/>
        <end position="99"/>
    </location>
</feature>
<feature type="helix" evidence="21">
    <location>
        <begin position="104"/>
        <end position="143"/>
    </location>
</feature>
<feature type="helix" evidence="21">
    <location>
        <begin position="148"/>
        <end position="150"/>
    </location>
</feature>
<feature type="helix" evidence="21">
    <location>
        <begin position="155"/>
        <end position="177"/>
    </location>
</feature>
<feature type="helix" evidence="21">
    <location>
        <begin position="179"/>
        <end position="193"/>
    </location>
</feature>
<feature type="turn" evidence="21">
    <location>
        <begin position="194"/>
        <end position="196"/>
    </location>
</feature>
<feature type="helix" evidence="21">
    <location>
        <begin position="201"/>
        <end position="215"/>
    </location>
</feature>
<feature type="strand" evidence="22">
    <location>
        <begin position="216"/>
        <end position="218"/>
    </location>
</feature>
<feature type="helix" evidence="21">
    <location>
        <begin position="219"/>
        <end position="229"/>
    </location>
</feature>
<feature type="strand" evidence="23">
    <location>
        <begin position="231"/>
        <end position="233"/>
    </location>
</feature>
<feature type="helix" evidence="21">
    <location>
        <begin position="234"/>
        <end position="250"/>
    </location>
</feature>
<feature type="helix" evidence="21">
    <location>
        <begin position="257"/>
        <end position="274"/>
    </location>
</feature>
<feature type="strand" evidence="21">
    <location>
        <begin position="275"/>
        <end position="278"/>
    </location>
</feature>
<feature type="helix" evidence="21">
    <location>
        <begin position="281"/>
        <end position="286"/>
    </location>
</feature>
<feature type="helix" evidence="21">
    <location>
        <begin position="292"/>
        <end position="301"/>
    </location>
</feature>
<feature type="strand" evidence="21">
    <location>
        <begin position="304"/>
        <end position="308"/>
    </location>
</feature>
<feature type="strand" evidence="21">
    <location>
        <begin position="311"/>
        <end position="314"/>
    </location>
</feature>
<feature type="helix" evidence="21">
    <location>
        <begin position="316"/>
        <end position="320"/>
    </location>
</feature>
<feature type="turn" evidence="21">
    <location>
        <begin position="323"/>
        <end position="325"/>
    </location>
</feature>
<feature type="helix" evidence="21">
    <location>
        <begin position="326"/>
        <end position="331"/>
    </location>
</feature>
<feature type="strand" evidence="22">
    <location>
        <begin position="333"/>
        <end position="335"/>
    </location>
</feature>
<feature type="helix" evidence="21">
    <location>
        <begin position="346"/>
        <end position="365"/>
    </location>
</feature>
<feature type="helix" evidence="21">
    <location>
        <begin position="384"/>
        <end position="417"/>
    </location>
</feature>
<feature type="turn" evidence="21">
    <location>
        <begin position="422"/>
        <end position="424"/>
    </location>
</feature>
<feature type="strand" evidence="23">
    <location>
        <begin position="426"/>
        <end position="428"/>
    </location>
</feature>
<feature type="helix" evidence="21">
    <location>
        <begin position="434"/>
        <end position="438"/>
    </location>
</feature>
<feature type="helix" evidence="21">
    <location>
        <begin position="440"/>
        <end position="442"/>
    </location>
</feature>
<feature type="helix" evidence="21">
    <location>
        <begin position="445"/>
        <end position="467"/>
    </location>
</feature>
<feature type="helix" evidence="21">
    <location>
        <begin position="469"/>
        <end position="489"/>
    </location>
</feature>
<feature type="turn" evidence="21">
    <location>
        <begin position="490"/>
        <end position="492"/>
    </location>
</feature>
<feature type="helix" evidence="21">
    <location>
        <begin position="493"/>
        <end position="501"/>
    </location>
</feature>
<feature type="helix" evidence="21">
    <location>
        <begin position="505"/>
        <end position="518"/>
    </location>
</feature>
<feature type="strand" evidence="21">
    <location>
        <begin position="522"/>
        <end position="525"/>
    </location>
</feature>
<feature type="helix" evidence="21">
    <location>
        <begin position="531"/>
        <end position="534"/>
    </location>
</feature>
<feature type="helix" evidence="21">
    <location>
        <begin position="556"/>
        <end position="570"/>
    </location>
</feature>
<feature type="turn" evidence="21">
    <location>
        <begin position="580"/>
        <end position="583"/>
    </location>
</feature>
<feature type="helix" evidence="21">
    <location>
        <begin position="586"/>
        <end position="598"/>
    </location>
</feature>
<feature type="helix" evidence="21">
    <location>
        <begin position="599"/>
        <end position="601"/>
    </location>
</feature>
<feature type="helix" evidence="21">
    <location>
        <begin position="602"/>
        <end position="606"/>
    </location>
</feature>
<feature type="helix" evidence="21">
    <location>
        <begin position="608"/>
        <end position="615"/>
    </location>
</feature>
<feature type="helix" evidence="21">
    <location>
        <begin position="619"/>
        <end position="621"/>
    </location>
</feature>
<feature type="helix" evidence="21">
    <location>
        <begin position="625"/>
        <end position="630"/>
    </location>
</feature>
<feature type="turn" evidence="21">
    <location>
        <begin position="631"/>
        <end position="633"/>
    </location>
</feature>
<feature type="helix" evidence="21">
    <location>
        <begin position="640"/>
        <end position="642"/>
    </location>
</feature>
<feature type="helix" evidence="21">
    <location>
        <begin position="644"/>
        <end position="655"/>
    </location>
</feature>
<feature type="helix" evidence="21">
    <location>
        <begin position="658"/>
        <end position="660"/>
    </location>
</feature>
<feature type="turn" evidence="21">
    <location>
        <begin position="661"/>
        <end position="663"/>
    </location>
</feature>
<feature type="helix" evidence="21">
    <location>
        <begin position="664"/>
        <end position="668"/>
    </location>
</feature>
<feature type="helix" evidence="21">
    <location>
        <begin position="670"/>
        <end position="680"/>
    </location>
</feature>
<feature type="helix" evidence="21">
    <location>
        <begin position="685"/>
        <end position="721"/>
    </location>
</feature>
<feature type="helix" evidence="21">
    <location>
        <begin position="725"/>
        <end position="733"/>
    </location>
</feature>
<feature type="helix" evidence="21">
    <location>
        <begin position="747"/>
        <end position="750"/>
    </location>
</feature>
<feature type="strand" evidence="21">
    <location>
        <begin position="755"/>
        <end position="757"/>
    </location>
</feature>
<feature type="strand" evidence="21">
    <location>
        <begin position="760"/>
        <end position="762"/>
    </location>
</feature>
<feature type="helix" evidence="21">
    <location>
        <begin position="764"/>
        <end position="788"/>
    </location>
</feature>
<feature type="helix" evidence="21">
    <location>
        <begin position="792"/>
        <end position="794"/>
    </location>
</feature>
<feature type="helix" evidence="21">
    <location>
        <begin position="795"/>
        <end position="813"/>
    </location>
</feature>
<feature type="helix" evidence="21">
    <location>
        <begin position="821"/>
        <end position="828"/>
    </location>
</feature>
<feature type="strand" evidence="21">
    <location>
        <begin position="832"/>
        <end position="836"/>
    </location>
</feature>
<feature type="helix" evidence="21">
    <location>
        <begin position="838"/>
        <end position="849"/>
    </location>
</feature>
<feature type="helix" evidence="21">
    <location>
        <begin position="851"/>
        <end position="854"/>
    </location>
</feature>
<feature type="strand" evidence="21">
    <location>
        <begin position="855"/>
        <end position="858"/>
    </location>
</feature>
<feature type="turn" evidence="21">
    <location>
        <begin position="859"/>
        <end position="862"/>
    </location>
</feature>
<feature type="strand" evidence="21">
    <location>
        <begin position="863"/>
        <end position="866"/>
    </location>
</feature>
<feature type="helix" evidence="21">
    <location>
        <begin position="869"/>
        <end position="871"/>
    </location>
</feature>
<feature type="helix" evidence="21">
    <location>
        <begin position="885"/>
        <end position="887"/>
    </location>
</feature>
<feature type="helix" evidence="21">
    <location>
        <begin position="892"/>
        <end position="901"/>
    </location>
</feature>
<feature type="helix" evidence="21">
    <location>
        <begin position="902"/>
        <end position="906"/>
    </location>
</feature>
<feature type="helix" evidence="21">
    <location>
        <begin position="911"/>
        <end position="942"/>
    </location>
</feature>
<feature type="helix" evidence="21">
    <location>
        <begin position="944"/>
        <end position="955"/>
    </location>
</feature>
<feature type="helix" evidence="21">
    <location>
        <begin position="965"/>
        <end position="967"/>
    </location>
</feature>
<feature type="helix" evidence="21">
    <location>
        <begin position="969"/>
        <end position="979"/>
    </location>
</feature>
<feature type="helix" evidence="21">
    <location>
        <begin position="981"/>
        <end position="984"/>
    </location>
</feature>
<feature type="turn" evidence="21">
    <location>
        <begin position="987"/>
        <end position="992"/>
    </location>
</feature>
<feature type="helix" evidence="21">
    <location>
        <begin position="993"/>
        <end position="1025"/>
    </location>
</feature>
<feature type="helix" evidence="21">
    <location>
        <begin position="1026"/>
        <end position="1029"/>
    </location>
</feature>
<feature type="helix" evidence="21">
    <location>
        <begin position="1043"/>
        <end position="1053"/>
    </location>
</feature>
<feature type="helix" evidence="21">
    <location>
        <begin position="1055"/>
        <end position="1057"/>
    </location>
</feature>
<feature type="helix" evidence="21">
    <location>
        <begin position="1059"/>
        <end position="1066"/>
    </location>
</feature>
<feature type="helix" evidence="21">
    <location>
        <begin position="1069"/>
        <end position="1083"/>
    </location>
</feature>
<feature type="helix" evidence="21">
    <location>
        <begin position="1086"/>
        <end position="1088"/>
    </location>
</feature>
<feature type="strand" evidence="21">
    <location>
        <begin position="1090"/>
        <end position="1092"/>
    </location>
</feature>
<feature type="helix" evidence="21">
    <location>
        <begin position="1093"/>
        <end position="1101"/>
    </location>
</feature>
<feature type="turn" evidence="21">
    <location>
        <begin position="1107"/>
        <end position="1110"/>
    </location>
</feature>
<feature type="strand" evidence="22">
    <location>
        <begin position="1115"/>
        <end position="1118"/>
    </location>
</feature>
<feature type="strand" evidence="21">
    <location>
        <begin position="1121"/>
        <end position="1123"/>
    </location>
</feature>
<feature type="helix" evidence="21">
    <location>
        <begin position="1127"/>
        <end position="1139"/>
    </location>
</feature>
<feature type="strand" evidence="23">
    <location>
        <begin position="1144"/>
        <end position="1146"/>
    </location>
</feature>
<feature type="helix" evidence="21">
    <location>
        <begin position="1149"/>
        <end position="1153"/>
    </location>
</feature>
<feature type="helix" evidence="21">
    <location>
        <begin position="1156"/>
        <end position="1167"/>
    </location>
</feature>
<feature type="helix" evidence="21">
    <location>
        <begin position="1171"/>
        <end position="1177"/>
    </location>
</feature>
<feature type="helix" evidence="21">
    <location>
        <begin position="1179"/>
        <end position="1190"/>
    </location>
</feature>
<feature type="strand" evidence="22">
    <location>
        <begin position="1195"/>
        <end position="1198"/>
    </location>
</feature>
<feature type="helix" evidence="21">
    <location>
        <begin position="1201"/>
        <end position="1225"/>
    </location>
</feature>
<name>CYFP1_HUMAN</name>
<comment type="function">
    <text evidence="1 4 6 7 9">Component of the CYFIP1-EIF4E-FMR1 complex which binds to the mRNA cap and mediates translational repression. In the CYFIP1-EIF4E-FMR1 complex this subunit is an adapter between EIF4E and FMR1. Promotes the translation repression activity of FMR1 in brain probably by mediating its association with EIF4E and mRNA (By similarity). Regulates formation of membrane ruffles and lamellipodia. Plays a role in axon outgrowth. Binds to F-actin but not to RNA. Part of the WAVE complex that regulates actin filament reorganization via its interaction with the Arp2/3 complex. Actin remodeling activity is regulated by RAC1. Regulator of epithelial morphogenesis. As component of the WAVE1 complex, required for BDNF-NTRK2 endocytic trafficking and signaling from early endosomes (By similarity). May act as an invasion suppressor in cancers.</text>
</comment>
<comment type="subunit">
    <text evidence="1 4 5 7">Component of the WAVE1 complex composed of ABI2, CYFIP1 or CYFIP2, BRK1, NCKAP1 and WASF1/WAVE1. Within the complex, a heterodimer containing NCKAP1 and CYFIP1 interacts with a heterotrimer formed by WAVE1, ABI2 and BRK1. Component of the CYFIP1-EIF4E-FMR1 complex which is composed of CYFIP, EIF4E and FMR1. Interacts with FMR1 but does not bind to related proteins FXR1 or FXR2. Interaction with EIF4E stimulates FMR1 binding. Component of the WAVE2 complex composed of ABI1, CYFIP1/SRA1, NCKAP1/NAP1 (NCKAP1l/HEM1 in hematopoietic cells) and WASF2/WAVE2 (PubMed:16417406). Interacts with the active GTP-bound form of RAC1. Interacts through its C-terminus with the C-terminus of DPYSL2/CRMP2 which is necessary for DPYSL2-induced axon outgrowth. Interacts with NYAP1, NYAP2 and MYO16. Interacts with TMEM108 (via N-terminus); the interaction associates TMEM108 with the WAVE1 complex (By similarity).</text>
</comment>
<comment type="interaction">
    <interactant intactId="EBI-1048143">
        <id>Q7L576</id>
    </interactant>
    <interactant intactId="EBI-640741">
        <id>P01023</id>
        <label>A2M</label>
    </interactant>
    <organismsDiffer>false</organismsDiffer>
    <experiments>3</experiments>
</comment>
<comment type="interaction">
    <interactant intactId="EBI-1048143">
        <id>Q7L576</id>
    </interactant>
    <interactant intactId="EBI-366305">
        <id>Q06787</id>
        <label>FMR1</label>
    </interactant>
    <organismsDiffer>false</organismsDiffer>
    <experiments>4</experiments>
</comment>
<comment type="interaction">
    <interactant intactId="EBI-1048143">
        <id>Q7L576</id>
    </interactant>
    <interactant intactId="EBI-10975473">
        <id>O60333-2</id>
        <label>KIF1B</label>
    </interactant>
    <organismsDiffer>false</organismsDiffer>
    <experiments>3</experiments>
</comment>
<comment type="interaction">
    <interactant intactId="EBI-1048143">
        <id>Q7L576</id>
    </interactant>
    <interactant intactId="EBI-948266">
        <id>O14901</id>
        <label>KLF11</label>
    </interactant>
    <organismsDiffer>false</organismsDiffer>
    <experiments>3</experiments>
</comment>
<comment type="interaction">
    <interactant intactId="EBI-1048143">
        <id>Q7L576</id>
    </interactant>
    <interactant intactId="EBI-1189067">
        <id>P51608</id>
        <label>MECP2</label>
    </interactant>
    <organismsDiffer>false</organismsDiffer>
    <experiments>3</experiments>
</comment>
<comment type="interaction">
    <interactant intactId="EBI-1048143">
        <id>Q7L576</id>
    </interactant>
    <interactant intactId="EBI-389845">
        <id>Q9Y2A7</id>
        <label>NCKAP1</label>
    </interactant>
    <organismsDiffer>false</organismsDiffer>
    <experiments>8</experiments>
</comment>
<comment type="interaction">
    <interactant intactId="EBI-1048143">
        <id>Q7L576</id>
    </interactant>
    <interactant intactId="EBI-475646">
        <id>P07196</id>
        <label>NEFL</label>
    </interactant>
    <organismsDiffer>false</organismsDiffer>
    <experiments>3</experiments>
</comment>
<comment type="interaction">
    <interactant intactId="EBI-1048143">
        <id>Q7L576</id>
    </interactant>
    <interactant intactId="EBI-5235340">
        <id>Q7Z699</id>
        <label>SPRED1</label>
    </interactant>
    <organismsDiffer>false</organismsDiffer>
    <experiments>3</experiments>
</comment>
<comment type="interaction">
    <interactant intactId="EBI-1048143">
        <id>Q7L576</id>
    </interactant>
    <interactant intactId="EBI-720609">
        <id>O76024</id>
        <label>WFS1</label>
    </interactant>
    <organismsDiffer>false</organismsDiffer>
    <experiments>3</experiments>
</comment>
<comment type="interaction">
    <interactant intactId="EBI-1048143">
        <id>Q7L576</id>
    </interactant>
    <interactant intactId="EBI-2000006">
        <id>P63073</id>
        <label>Eif4e</label>
    </interactant>
    <organismsDiffer>true</organismsDiffer>
    <experiments>2</experiments>
</comment>
<comment type="subcellular location">
    <subcellularLocation>
        <location evidence="1">Cytoplasm</location>
    </subcellularLocation>
    <subcellularLocation>
        <location evidence="1">Cytoplasm</location>
        <location evidence="1">Perinuclear region</location>
    </subcellularLocation>
    <subcellularLocation>
        <location evidence="1">Cell projection</location>
        <location evidence="1">Lamellipodium</location>
    </subcellularLocation>
    <subcellularLocation>
        <location evidence="1">Cell projection</location>
        <location evidence="1">Ruffle</location>
    </subcellularLocation>
    <subcellularLocation>
        <location evidence="1">Synapse</location>
        <location evidence="1">Synaptosome</location>
    </subcellularLocation>
    <text evidence="1">Highly expressed in the perinuclear region (By similarity). Enriched in synaptosomes (By similarity). Also enriched in membrane ruffles and at the tips of lamellipodia (By similarity).</text>
</comment>
<comment type="alternative products">
    <event type="alternative splicing"/>
    <isoform>
        <id>Q7L576-1</id>
        <name>1</name>
        <name>3</name>
        <sequence type="displayed"/>
    </isoform>
    <isoform>
        <id>Q7L576-2</id>
        <name>2</name>
        <name>4</name>
        <sequence type="described" ref="VSP_052346 VSP_052347"/>
    </isoform>
    <isoform>
        <id>Q7L576-3</id>
        <name>3</name>
        <name>5</name>
        <sequence type="described" ref="VSP_052345"/>
    </isoform>
</comment>
<comment type="miscellaneous">
    <text>Breakpoint hotspot for the Prader-Willi/Angelman syndromes and may be implicated in autism. Commonly altered in tumors.</text>
</comment>
<comment type="similarity">
    <text evidence="2">Belongs to the CYFIP family.</text>
</comment>
<comment type="sequence caution" evidence="13">
    <conflict type="erroneous initiation">
        <sequence resource="EMBL-CDS" id="BAA07552"/>
    </conflict>
    <text>Extended N-terminus.</text>
</comment>
<gene>
    <name evidence="19" type="primary">CYFIP1</name>
    <name evidence="17" type="synonym">KIAA0068</name>
</gene>
<evidence type="ECO:0000250" key="1">
    <source>
        <dbReference type="UniProtKB" id="Q7TMB8"/>
    </source>
</evidence>
<evidence type="ECO:0000255" key="2"/>
<evidence type="ECO:0000269" key="3">
    <source>
    </source>
</evidence>
<evidence type="ECO:0000269" key="4">
    <source>
    </source>
</evidence>
<evidence type="ECO:0000269" key="5">
    <source>
    </source>
</evidence>
<evidence type="ECO:0000269" key="6">
    <source>
    </source>
</evidence>
<evidence type="ECO:0000269" key="7">
    <source>
    </source>
</evidence>
<evidence type="ECO:0000269" key="8">
    <source>
    </source>
</evidence>
<evidence type="ECO:0000269" key="9">
    <source>
    </source>
</evidence>
<evidence type="ECO:0000269" key="10">
    <source ref="1"/>
</evidence>
<evidence type="ECO:0000303" key="11">
    <source>
    </source>
</evidence>
<evidence type="ECO:0000303" key="12">
    <source ref="1"/>
</evidence>
<evidence type="ECO:0000305" key="13"/>
<evidence type="ECO:0000312" key="14">
    <source>
        <dbReference type="EMBL" id="AAH01306.2"/>
    </source>
</evidence>
<evidence type="ECO:0000312" key="15">
    <source>
        <dbReference type="EMBL" id="AAH05097.1"/>
    </source>
</evidence>
<evidence type="ECO:0000312" key="16">
    <source>
        <dbReference type="EMBL" id="AAW51476.1"/>
    </source>
</evidence>
<evidence type="ECO:0000312" key="17">
    <source>
        <dbReference type="EMBL" id="BAA07552.1"/>
    </source>
</evidence>
<evidence type="ECO:0000312" key="18">
    <source>
        <dbReference type="EMBL" id="BAC86825.1"/>
    </source>
</evidence>
<evidence type="ECO:0000312" key="19">
    <source>
        <dbReference type="HGNC" id="HGNC:13759"/>
    </source>
</evidence>
<evidence type="ECO:0007744" key="20">
    <source>
    </source>
</evidence>
<evidence type="ECO:0007829" key="21">
    <source>
        <dbReference type="PDB" id="3P8C"/>
    </source>
</evidence>
<evidence type="ECO:0007829" key="22">
    <source>
        <dbReference type="PDB" id="7USC"/>
    </source>
</evidence>
<evidence type="ECO:0007829" key="23">
    <source>
        <dbReference type="PDB" id="7USD"/>
    </source>
</evidence>
<accession>Q7L576</accession>
<accession>A8K6D9</accession>
<accession>Q14467</accession>
<accession>Q5IED0</accession>
<accession>Q6ZSX1</accession>
<accession>Q9BSD9</accession>
<accession>Q9BVC7</accession>
<dbReference type="EMBL" id="AY763577">
    <property type="protein sequence ID" value="AAW51476.1"/>
    <property type="molecule type" value="mRNA"/>
</dbReference>
<dbReference type="EMBL" id="AY763578">
    <property type="protein sequence ID" value="AAW51477.1"/>
    <property type="molecule type" value="mRNA"/>
</dbReference>
<dbReference type="EMBL" id="AY763579">
    <property type="protein sequence ID" value="AAW51478.1"/>
    <property type="molecule type" value="mRNA"/>
</dbReference>
<dbReference type="EMBL" id="AY763580">
    <property type="protein sequence ID" value="AAW51479.1"/>
    <property type="molecule type" value="mRNA"/>
</dbReference>
<dbReference type="EMBL" id="D38549">
    <property type="protein sequence ID" value="BAA07552.1"/>
    <property type="status" value="ALT_INIT"/>
    <property type="molecule type" value="mRNA"/>
</dbReference>
<dbReference type="EMBL" id="AK127094">
    <property type="protein sequence ID" value="BAC86825.1"/>
    <property type="molecule type" value="mRNA"/>
</dbReference>
<dbReference type="EMBL" id="AK291604">
    <property type="protein sequence ID" value="BAF84293.1"/>
    <property type="molecule type" value="mRNA"/>
</dbReference>
<dbReference type="EMBL" id="CH471258">
    <property type="protein sequence ID" value="EAW65555.1"/>
    <property type="molecule type" value="Genomic_DNA"/>
</dbReference>
<dbReference type="EMBL" id="BC001306">
    <property type="protein sequence ID" value="AAH01306.2"/>
    <property type="molecule type" value="mRNA"/>
</dbReference>
<dbReference type="EMBL" id="BC005097">
    <property type="protein sequence ID" value="AAH05097.1"/>
    <property type="molecule type" value="mRNA"/>
</dbReference>
<dbReference type="CCDS" id="CCDS73695.1">
    <molecule id="Q7L576-2"/>
</dbReference>
<dbReference type="CCDS" id="CCDS73696.1">
    <molecule id="Q7L576-1"/>
</dbReference>
<dbReference type="RefSeq" id="NP_001028200.1">
    <molecule id="Q7L576-2"/>
    <property type="nucleotide sequence ID" value="NM_001033028.3"/>
</dbReference>
<dbReference type="RefSeq" id="NP_001274739.1">
    <molecule id="Q7L576-1"/>
    <property type="nucleotide sequence ID" value="NM_001287810.4"/>
</dbReference>
<dbReference type="RefSeq" id="NP_001311049.1">
    <molecule id="Q7L576-1"/>
    <property type="nucleotide sequence ID" value="NM_001324120.2"/>
</dbReference>
<dbReference type="RefSeq" id="NP_001311052.1">
    <molecule id="Q7L576-1"/>
    <property type="nucleotide sequence ID" value="NM_001324123.3"/>
</dbReference>
<dbReference type="RefSeq" id="NP_055423.1">
    <molecule id="Q7L576-1"/>
    <property type="nucleotide sequence ID" value="NM_014608.6"/>
</dbReference>
<dbReference type="PDB" id="3P8C">
    <property type="method" value="X-ray"/>
    <property type="resolution" value="2.29 A"/>
    <property type="chains" value="A=1-1253"/>
</dbReference>
<dbReference type="PDB" id="4N78">
    <property type="method" value="X-ray"/>
    <property type="resolution" value="2.43 A"/>
    <property type="chains" value="A=1-1253"/>
</dbReference>
<dbReference type="PDB" id="7USC">
    <property type="method" value="EM"/>
    <property type="resolution" value="3.00 A"/>
    <property type="chains" value="A=1-1253"/>
</dbReference>
<dbReference type="PDB" id="7USD">
    <property type="method" value="EM"/>
    <property type="resolution" value="3.00 A"/>
    <property type="chains" value="A=1-1253"/>
</dbReference>
<dbReference type="PDB" id="7USE">
    <property type="method" value="EM"/>
    <property type="resolution" value="3.00 A"/>
    <property type="chains" value="A=1-1253"/>
</dbReference>
<dbReference type="PDBsum" id="3P8C"/>
<dbReference type="PDBsum" id="4N78"/>
<dbReference type="PDBsum" id="7USC"/>
<dbReference type="PDBsum" id="7USD"/>
<dbReference type="PDBsum" id="7USE"/>
<dbReference type="EMDB" id="EMD-26732"/>
<dbReference type="EMDB" id="EMD-26733"/>
<dbReference type="EMDB" id="EMD-26734"/>
<dbReference type="SMR" id="Q7L576"/>
<dbReference type="BioGRID" id="116800">
    <property type="interactions" value="197"/>
</dbReference>
<dbReference type="ComplexPortal" id="CPX-2349">
    <property type="entry name" value="eIF4E-CYFIP1-FMRP translational repressor complex"/>
</dbReference>
<dbReference type="CORUM" id="Q7L576"/>
<dbReference type="DIP" id="DIP-38873N"/>
<dbReference type="FunCoup" id="Q7L576">
    <property type="interactions" value="1740"/>
</dbReference>
<dbReference type="IntAct" id="Q7L576">
    <property type="interactions" value="98"/>
</dbReference>
<dbReference type="MINT" id="Q7L576"/>
<dbReference type="STRING" id="9606.ENSP00000481038"/>
<dbReference type="GlyConnect" id="1168">
    <property type="glycosylation" value="1 N-Linked glycan (1 site)"/>
</dbReference>
<dbReference type="GlyCosmos" id="Q7L576">
    <property type="glycosylation" value="1 site, 1 glycan"/>
</dbReference>
<dbReference type="GlyGen" id="Q7L576">
    <property type="glycosylation" value="2 sites, 1 N-linked glycan (1 site), 1 O-linked glycan (1 site)"/>
</dbReference>
<dbReference type="iPTMnet" id="Q7L576"/>
<dbReference type="MetOSite" id="Q7L576"/>
<dbReference type="PhosphoSitePlus" id="Q7L576"/>
<dbReference type="SwissPalm" id="Q7L576"/>
<dbReference type="BioMuta" id="CYFIP1"/>
<dbReference type="DMDM" id="74738589"/>
<dbReference type="jPOST" id="Q7L576"/>
<dbReference type="MassIVE" id="Q7L576"/>
<dbReference type="PaxDb" id="9606-ENSP00000481038"/>
<dbReference type="PeptideAtlas" id="Q7L576"/>
<dbReference type="ProteomicsDB" id="68792">
    <molecule id="Q7L576-1"/>
</dbReference>
<dbReference type="ProteomicsDB" id="68793">
    <molecule id="Q7L576-2"/>
</dbReference>
<dbReference type="ProteomicsDB" id="68794">
    <molecule id="Q7L576-3"/>
</dbReference>
<dbReference type="Pumba" id="Q7L576"/>
<dbReference type="Antibodypedia" id="72407">
    <property type="antibodies" value="113 antibodies from 27 providers"/>
</dbReference>
<dbReference type="DNASU" id="23191"/>
<dbReference type="Ensembl" id="ENST00000610365.4">
    <molecule id="Q7L576-1"/>
    <property type="protein sequence ID" value="ENSP00000478779.1"/>
    <property type="gene ID" value="ENSG00000273749.5"/>
</dbReference>
<dbReference type="Ensembl" id="ENST00000617556.4">
    <molecule id="Q7L576-2"/>
    <property type="protein sequence ID" value="ENSP00000480525.1"/>
    <property type="gene ID" value="ENSG00000273749.5"/>
</dbReference>
<dbReference type="Ensembl" id="ENST00000617928.5">
    <molecule id="Q7L576-1"/>
    <property type="protein sequence ID" value="ENSP00000481038.1"/>
    <property type="gene ID" value="ENSG00000273749.5"/>
</dbReference>
<dbReference type="Ensembl" id="ENST00000671714.1">
    <molecule id="Q7L576-1"/>
    <property type="protein sequence ID" value="ENSP00000500331.1"/>
    <property type="gene ID" value="ENSG00000288461.1"/>
</dbReference>
<dbReference type="Ensembl" id="ENST00000672091.1">
    <molecule id="Q7L576-1"/>
    <property type="protein sequence ID" value="ENSP00000499947.1"/>
    <property type="gene ID" value="ENSG00000288461.1"/>
</dbReference>
<dbReference type="GeneID" id="23191"/>
<dbReference type="KEGG" id="hsa:23191"/>
<dbReference type="MANE-Select" id="ENST00000617928.5">
    <property type="protein sequence ID" value="ENSP00000481038.1"/>
    <property type="RefSeq nucleotide sequence ID" value="NM_014608.6"/>
    <property type="RefSeq protein sequence ID" value="NP_055423.1"/>
</dbReference>
<dbReference type="UCSC" id="uc001yus.5">
    <molecule id="Q7L576-1"/>
    <property type="organism name" value="human"/>
</dbReference>
<dbReference type="AGR" id="HGNC:13759"/>
<dbReference type="CTD" id="23191"/>
<dbReference type="DisGeNET" id="23191"/>
<dbReference type="GeneCards" id="CYFIP1"/>
<dbReference type="HGNC" id="HGNC:13759">
    <property type="gene designation" value="CYFIP1"/>
</dbReference>
<dbReference type="HPA" id="ENSG00000273749">
    <property type="expression patterns" value="Low tissue specificity"/>
</dbReference>
<dbReference type="MalaCards" id="CYFIP1"/>
<dbReference type="MIM" id="606322">
    <property type="type" value="gene"/>
</dbReference>
<dbReference type="neXtProt" id="NX_Q7L576"/>
<dbReference type="OpenTargets" id="ENSG00000273749"/>
<dbReference type="PharmGKB" id="PA38367"/>
<dbReference type="VEuPathDB" id="HostDB:ENSG00000273749"/>
<dbReference type="eggNOG" id="KOG3534">
    <property type="taxonomic scope" value="Eukaryota"/>
</dbReference>
<dbReference type="GeneTree" id="ENSGT00500000044831"/>
<dbReference type="HOGENOM" id="CLU_002688_2_1_1"/>
<dbReference type="InParanoid" id="Q7L576"/>
<dbReference type="OMA" id="HKESFFY"/>
<dbReference type="OrthoDB" id="10265867at2759"/>
<dbReference type="PAN-GO" id="Q7L576">
    <property type="GO annotations" value="9 GO annotations based on evolutionary models"/>
</dbReference>
<dbReference type="PhylomeDB" id="Q7L576"/>
<dbReference type="TreeFam" id="TF312925"/>
<dbReference type="PathwayCommons" id="Q7L576"/>
<dbReference type="Reactome" id="R-HSA-2029482">
    <property type="pathway name" value="Regulation of actin dynamics for phagocytic cup formation"/>
</dbReference>
<dbReference type="Reactome" id="R-HSA-4420097">
    <property type="pathway name" value="VEGFA-VEGFR2 Pathway"/>
</dbReference>
<dbReference type="Reactome" id="R-HSA-5663213">
    <property type="pathway name" value="RHO GTPases Activate WASPs and WAVEs"/>
</dbReference>
<dbReference type="Reactome" id="R-HSA-6798695">
    <property type="pathway name" value="Neutrophil degranulation"/>
</dbReference>
<dbReference type="Reactome" id="R-HSA-9013149">
    <property type="pathway name" value="RAC1 GTPase cycle"/>
</dbReference>
<dbReference type="Reactome" id="R-HSA-9013404">
    <property type="pathway name" value="RAC2 GTPase cycle"/>
</dbReference>
<dbReference type="Reactome" id="R-HSA-9013408">
    <property type="pathway name" value="RHOG GTPase cycle"/>
</dbReference>
<dbReference type="Reactome" id="R-HSA-9013423">
    <property type="pathway name" value="RAC3 GTPase cycle"/>
</dbReference>
<dbReference type="Reactome" id="R-HSA-9664422">
    <property type="pathway name" value="FCGR3A-mediated phagocytosis"/>
</dbReference>
<dbReference type="SignaLink" id="Q7L576"/>
<dbReference type="SIGNOR" id="Q7L576"/>
<dbReference type="BioGRID-ORCS" id="23191">
    <property type="hits" value="276 hits in 1157 CRISPR screens"/>
</dbReference>
<dbReference type="ChiTaRS" id="CYFIP1">
    <property type="organism name" value="human"/>
</dbReference>
<dbReference type="EvolutionaryTrace" id="Q7L576"/>
<dbReference type="GeneWiki" id="CYFIP1"/>
<dbReference type="GenomeRNAi" id="23191"/>
<dbReference type="Pharos" id="Q7L576">
    <property type="development level" value="Tbio"/>
</dbReference>
<dbReference type="PRO" id="PR:Q7L576"/>
<dbReference type="Proteomes" id="UP000005640">
    <property type="component" value="Chromosome 15"/>
</dbReference>
<dbReference type="RNAct" id="Q7L576">
    <property type="molecule type" value="protein"/>
</dbReference>
<dbReference type="Bgee" id="ENSG00000273749">
    <property type="expression patterns" value="Expressed in esophagus squamous epithelium and 211 other cell types or tissues"/>
</dbReference>
<dbReference type="ExpressionAtlas" id="Q7L576">
    <property type="expression patterns" value="baseline and differential"/>
</dbReference>
<dbReference type="GO" id="GO:0005829">
    <property type="term" value="C:cytosol"/>
    <property type="evidence" value="ECO:0000304"/>
    <property type="project" value="Reactome"/>
</dbReference>
<dbReference type="GO" id="GO:0070062">
    <property type="term" value="C:extracellular exosome"/>
    <property type="evidence" value="ECO:0007005"/>
    <property type="project" value="UniProtKB"/>
</dbReference>
<dbReference type="GO" id="GO:0005576">
    <property type="term" value="C:extracellular region"/>
    <property type="evidence" value="ECO:0000304"/>
    <property type="project" value="Reactome"/>
</dbReference>
<dbReference type="GO" id="GO:0005925">
    <property type="term" value="C:focal adhesion"/>
    <property type="evidence" value="ECO:0007005"/>
    <property type="project" value="UniProtKB"/>
</dbReference>
<dbReference type="GO" id="GO:0030027">
    <property type="term" value="C:lamellipodium"/>
    <property type="evidence" value="ECO:0000250"/>
    <property type="project" value="UniProtKB"/>
</dbReference>
<dbReference type="GO" id="GO:0043005">
    <property type="term" value="C:neuron projection"/>
    <property type="evidence" value="ECO:0000250"/>
    <property type="project" value="UniProtKB"/>
</dbReference>
<dbReference type="GO" id="GO:0048471">
    <property type="term" value="C:perinuclear region of cytoplasm"/>
    <property type="evidence" value="ECO:0000250"/>
    <property type="project" value="UniProtKB"/>
</dbReference>
<dbReference type="GO" id="GO:0098794">
    <property type="term" value="C:postsynapse"/>
    <property type="evidence" value="ECO:0007669"/>
    <property type="project" value="Ensembl"/>
</dbReference>
<dbReference type="GO" id="GO:0001726">
    <property type="term" value="C:ruffle"/>
    <property type="evidence" value="ECO:0000250"/>
    <property type="project" value="UniProtKB"/>
</dbReference>
<dbReference type="GO" id="GO:0031209">
    <property type="term" value="C:SCAR complex"/>
    <property type="evidence" value="ECO:0000314"/>
    <property type="project" value="UniProtKB"/>
</dbReference>
<dbReference type="GO" id="GO:0034774">
    <property type="term" value="C:secretory granule lumen"/>
    <property type="evidence" value="ECO:0000304"/>
    <property type="project" value="Reactome"/>
</dbReference>
<dbReference type="GO" id="GO:0035580">
    <property type="term" value="C:specific granule lumen"/>
    <property type="evidence" value="ECO:0000304"/>
    <property type="project" value="Reactome"/>
</dbReference>
<dbReference type="GO" id="GO:0045202">
    <property type="term" value="C:synapse"/>
    <property type="evidence" value="ECO:0000318"/>
    <property type="project" value="GO_Central"/>
</dbReference>
<dbReference type="GO" id="GO:1904724">
    <property type="term" value="C:tertiary granule lumen"/>
    <property type="evidence" value="ECO:0000304"/>
    <property type="project" value="Reactome"/>
</dbReference>
<dbReference type="GO" id="GO:0051015">
    <property type="term" value="F:actin filament binding"/>
    <property type="evidence" value="ECO:0000250"/>
    <property type="project" value="UniProtKB"/>
</dbReference>
<dbReference type="GO" id="GO:0000340">
    <property type="term" value="F:RNA 7-methylguanosine cap binding"/>
    <property type="evidence" value="ECO:0000318"/>
    <property type="project" value="GO_Central"/>
</dbReference>
<dbReference type="GO" id="GO:0031267">
    <property type="term" value="F:small GTPase binding"/>
    <property type="evidence" value="ECO:0000250"/>
    <property type="project" value="UniProtKB"/>
</dbReference>
<dbReference type="GO" id="GO:0030371">
    <property type="term" value="F:translation repressor activity"/>
    <property type="evidence" value="ECO:0000250"/>
    <property type="project" value="UniProtKB"/>
</dbReference>
<dbReference type="GO" id="GO:0048675">
    <property type="term" value="P:axon extension"/>
    <property type="evidence" value="ECO:0000315"/>
    <property type="project" value="UniProtKB"/>
</dbReference>
<dbReference type="GO" id="GO:0007411">
    <property type="term" value="P:axon guidance"/>
    <property type="evidence" value="ECO:0000318"/>
    <property type="project" value="GO_Central"/>
</dbReference>
<dbReference type="GO" id="GO:0000902">
    <property type="term" value="P:cell morphogenesis"/>
    <property type="evidence" value="ECO:0000318"/>
    <property type="project" value="GO_Central"/>
</dbReference>
<dbReference type="GO" id="GO:0050890">
    <property type="term" value="P:cognition"/>
    <property type="evidence" value="ECO:0000315"/>
    <property type="project" value="UniProtKB"/>
</dbReference>
<dbReference type="GO" id="GO:0097484">
    <property type="term" value="P:dendrite extension"/>
    <property type="evidence" value="ECO:0007669"/>
    <property type="project" value="Ensembl"/>
</dbReference>
<dbReference type="GO" id="GO:0030032">
    <property type="term" value="P:lamellipodium assembly"/>
    <property type="evidence" value="ECO:0000250"/>
    <property type="project" value="UniProtKB"/>
</dbReference>
<dbReference type="GO" id="GO:2000601">
    <property type="term" value="P:positive regulation of Arp2/3 complex-mediated actin nucleation"/>
    <property type="evidence" value="ECO:0000315"/>
    <property type="project" value="UniProtKB"/>
</dbReference>
<dbReference type="GO" id="GO:0010592">
    <property type="term" value="P:positive regulation of lamellipodium assembly"/>
    <property type="evidence" value="ECO:0000314"/>
    <property type="project" value="ARUK-UCL"/>
</dbReference>
<dbReference type="GO" id="GO:0051388">
    <property type="term" value="P:positive regulation of neurotrophin TRK receptor signaling pathway"/>
    <property type="evidence" value="ECO:0007669"/>
    <property type="project" value="Ensembl"/>
</dbReference>
<dbReference type="GO" id="GO:0016601">
    <property type="term" value="P:Rac protein signal transduction"/>
    <property type="evidence" value="ECO:0000315"/>
    <property type="project" value="UniProtKB"/>
</dbReference>
<dbReference type="GO" id="GO:0030833">
    <property type="term" value="P:regulation of actin filament polymerization"/>
    <property type="evidence" value="ECO:0007669"/>
    <property type="project" value="InterPro"/>
</dbReference>
<dbReference type="GO" id="GO:0008360">
    <property type="term" value="P:regulation of cell shape"/>
    <property type="evidence" value="ECO:0007669"/>
    <property type="project" value="UniProtKB-KW"/>
</dbReference>
<dbReference type="GO" id="GO:1905274">
    <property type="term" value="P:regulation of modification of postsynaptic actin cytoskeleton"/>
    <property type="evidence" value="ECO:0007669"/>
    <property type="project" value="Ensembl"/>
</dbReference>
<dbReference type="GO" id="GO:0006417">
    <property type="term" value="P:regulation of translation"/>
    <property type="evidence" value="ECO:0000318"/>
    <property type="project" value="GO_Central"/>
</dbReference>
<dbReference type="GO" id="GO:0099578">
    <property type="term" value="P:regulation of translation at postsynapse, modulating synaptic transmission"/>
    <property type="evidence" value="ECO:0007669"/>
    <property type="project" value="Ensembl"/>
</dbReference>
<dbReference type="GO" id="GO:0031529">
    <property type="term" value="P:ruffle organization"/>
    <property type="evidence" value="ECO:0000250"/>
    <property type="project" value="UniProtKB"/>
</dbReference>
<dbReference type="InterPro" id="IPR009828">
    <property type="entry name" value="CYRIA/CYRIB_Rac1-bd"/>
</dbReference>
<dbReference type="InterPro" id="IPR008081">
    <property type="entry name" value="Cytoplasmic_FMR1-int"/>
</dbReference>
<dbReference type="PANTHER" id="PTHR12195">
    <property type="entry name" value="CYTOPLASMIC FMR1-INTERACTING PROTEIN-RELATED"/>
    <property type="match status" value="1"/>
</dbReference>
<dbReference type="Pfam" id="PF07159">
    <property type="entry name" value="CYRIA-B_Rac1-bd"/>
    <property type="match status" value="1"/>
</dbReference>
<dbReference type="Pfam" id="PF05994">
    <property type="entry name" value="FragX_IP"/>
    <property type="match status" value="1"/>
</dbReference>
<dbReference type="PIRSF" id="PIRSF008153">
    <property type="entry name" value="FMR1_interacting"/>
    <property type="match status" value="1"/>
</dbReference>
<dbReference type="PRINTS" id="PR01698">
    <property type="entry name" value="CYTOFMRPINTP"/>
</dbReference>
<proteinExistence type="evidence at protein level"/>
<keyword id="KW-0002">3D-structure</keyword>
<keyword id="KW-0009">Actin-binding</keyword>
<keyword id="KW-0025">Alternative splicing</keyword>
<keyword id="KW-0966">Cell projection</keyword>
<keyword id="KW-0133">Cell shape</keyword>
<keyword id="KW-0963">Cytoplasm</keyword>
<keyword id="KW-0217">Developmental protein</keyword>
<keyword id="KW-0221">Differentiation</keyword>
<keyword id="KW-0903">Direct protein sequencing</keyword>
<keyword id="KW-0524">Neurogenesis</keyword>
<keyword id="KW-0597">Phosphoprotein</keyword>
<keyword id="KW-1267">Proteomics identification</keyword>
<keyword id="KW-1185">Reference proteome</keyword>
<keyword id="KW-0770">Synapse</keyword>
<keyword id="KW-0771">Synaptosome</keyword>